<feature type="chain" id="PRO_0000262916" description="F-box only protein 32">
    <location>
        <begin position="1"/>
        <end position="355"/>
    </location>
</feature>
<feature type="domain" description="F-box">
    <location>
        <begin position="223"/>
        <end position="271"/>
    </location>
</feature>
<feature type="short sequence motif" description="Nuclear localization signal" evidence="1">
    <location>
        <begin position="62"/>
        <end position="67"/>
    </location>
</feature>
<feature type="short sequence motif" description="Nuclear export signal" evidence="1">
    <location>
        <begin position="169"/>
        <end position="173"/>
    </location>
</feature>
<feature type="short sequence motif" description="Bipartite nuclear localization signal" evidence="1">
    <location>
        <begin position="280"/>
        <end position="295"/>
    </location>
</feature>
<accession>Q1A730</accession>
<dbReference type="EMBL" id="DQ288235">
    <property type="protein sequence ID" value="ABC47657.1"/>
    <property type="molecule type" value="mRNA"/>
</dbReference>
<dbReference type="RefSeq" id="NP_001038053.1">
    <property type="nucleotide sequence ID" value="NM_001044588.1"/>
</dbReference>
<dbReference type="FunCoup" id="Q1A730">
    <property type="interactions" value="267"/>
</dbReference>
<dbReference type="STRING" id="9823.ENSSSCP00000056368"/>
<dbReference type="PaxDb" id="9823-ENSSSCP00000006389"/>
<dbReference type="Ensembl" id="ENSSSCT00000044541.3">
    <property type="protein sequence ID" value="ENSSSCP00000035710.2"/>
    <property type="gene ID" value="ENSSSCG00000005981.5"/>
</dbReference>
<dbReference type="Ensembl" id="ENSSSCT00015110400.1">
    <property type="protein sequence ID" value="ENSSSCP00015047162.1"/>
    <property type="gene ID" value="ENSSSCG00015081012.1"/>
</dbReference>
<dbReference type="Ensembl" id="ENSSSCT00025053789.1">
    <property type="protein sequence ID" value="ENSSSCP00025022915.1"/>
    <property type="gene ID" value="ENSSSCG00025039530.1"/>
</dbReference>
<dbReference type="Ensembl" id="ENSSSCT00030076910.1">
    <property type="protein sequence ID" value="ENSSSCP00030035110.1"/>
    <property type="gene ID" value="ENSSSCG00030055185.1"/>
</dbReference>
<dbReference type="Ensembl" id="ENSSSCT00035056942.1">
    <property type="protein sequence ID" value="ENSSSCP00035022904.1"/>
    <property type="gene ID" value="ENSSSCG00035042848.1"/>
</dbReference>
<dbReference type="Ensembl" id="ENSSSCT00040081035.1">
    <property type="protein sequence ID" value="ENSSSCP00040035166.1"/>
    <property type="gene ID" value="ENSSSCG00040059594.1"/>
</dbReference>
<dbReference type="Ensembl" id="ENSSSCT00045030665.1">
    <property type="protein sequence ID" value="ENSSSCP00045021257.1"/>
    <property type="gene ID" value="ENSSSCG00045017934.1"/>
</dbReference>
<dbReference type="Ensembl" id="ENSSSCT00050017399.1">
    <property type="protein sequence ID" value="ENSSSCP00050007173.1"/>
    <property type="gene ID" value="ENSSSCG00050012882.1"/>
</dbReference>
<dbReference type="Ensembl" id="ENSSSCT00055025119.1">
    <property type="protein sequence ID" value="ENSSSCP00055019958.1"/>
    <property type="gene ID" value="ENSSSCG00055012753.1"/>
</dbReference>
<dbReference type="Ensembl" id="ENSSSCT00060020401.1">
    <property type="protein sequence ID" value="ENSSSCP00060008350.1"/>
    <property type="gene ID" value="ENSSSCG00060015331.1"/>
</dbReference>
<dbReference type="Ensembl" id="ENSSSCT00065094399.1">
    <property type="protein sequence ID" value="ENSSSCP00065041283.1"/>
    <property type="gene ID" value="ENSSSCG00065068772.1"/>
</dbReference>
<dbReference type="Ensembl" id="ENSSSCT00070011138.1">
    <property type="protein sequence ID" value="ENSSSCP00070009180.1"/>
    <property type="gene ID" value="ENSSSCG00070005842.1"/>
</dbReference>
<dbReference type="Ensembl" id="ENSSSCT00085002336">
    <property type="protein sequence ID" value="ENSSSCP00085001696"/>
    <property type="gene ID" value="ENSSSCG00085001526"/>
</dbReference>
<dbReference type="Ensembl" id="ENSSSCT00090005183">
    <property type="protein sequence ID" value="ENSSSCP00090003246"/>
    <property type="gene ID" value="ENSSSCG00090002983"/>
</dbReference>
<dbReference type="Ensembl" id="ENSSSCT00105025087">
    <property type="protein sequence ID" value="ENSSSCP00105017801"/>
    <property type="gene ID" value="ENSSSCG00105012782"/>
</dbReference>
<dbReference type="Ensembl" id="ENSSSCT00110002038">
    <property type="protein sequence ID" value="ENSSSCP00110001548"/>
    <property type="gene ID" value="ENSSSCG00110001033"/>
</dbReference>
<dbReference type="Ensembl" id="ENSSSCT00115009834">
    <property type="protein sequence ID" value="ENSSSCP00115009252"/>
    <property type="gene ID" value="ENSSSCG00115005689"/>
</dbReference>
<dbReference type="Ensembl" id="ENSSSCT00130020178">
    <property type="protein sequence ID" value="ENSSSCP00130013802"/>
    <property type="gene ID" value="ENSSSCG00130010660"/>
</dbReference>
<dbReference type="GeneID" id="733657"/>
<dbReference type="KEGG" id="ssc:733657"/>
<dbReference type="CTD" id="114907"/>
<dbReference type="VGNC" id="VGNC:88039">
    <property type="gene designation" value="FBXO32"/>
</dbReference>
<dbReference type="eggNOG" id="KOG3926">
    <property type="taxonomic scope" value="Eukaryota"/>
</dbReference>
<dbReference type="GeneTree" id="ENSGT00390000004915"/>
<dbReference type="InParanoid" id="Q1A730"/>
<dbReference type="OMA" id="NINTWVH"/>
<dbReference type="OrthoDB" id="9991467at2759"/>
<dbReference type="Reactome" id="R-SSC-8951664">
    <property type="pathway name" value="Neddylation"/>
</dbReference>
<dbReference type="Reactome" id="R-SSC-983168">
    <property type="pathway name" value="Antigen processing: Ubiquitination &amp; Proteasome degradation"/>
</dbReference>
<dbReference type="UniPathway" id="UPA00143"/>
<dbReference type="Proteomes" id="UP000008227">
    <property type="component" value="Chromosome 4"/>
</dbReference>
<dbReference type="Proteomes" id="UP000314985">
    <property type="component" value="Chromosome 4"/>
</dbReference>
<dbReference type="Proteomes" id="UP000694570">
    <property type="component" value="Unplaced"/>
</dbReference>
<dbReference type="Proteomes" id="UP000694571">
    <property type="component" value="Unplaced"/>
</dbReference>
<dbReference type="Proteomes" id="UP000694720">
    <property type="component" value="Unplaced"/>
</dbReference>
<dbReference type="Proteomes" id="UP000694722">
    <property type="component" value="Unplaced"/>
</dbReference>
<dbReference type="Proteomes" id="UP000694723">
    <property type="component" value="Unplaced"/>
</dbReference>
<dbReference type="Proteomes" id="UP000694724">
    <property type="component" value="Unplaced"/>
</dbReference>
<dbReference type="Proteomes" id="UP000694725">
    <property type="component" value="Unplaced"/>
</dbReference>
<dbReference type="Proteomes" id="UP000694726">
    <property type="component" value="Unplaced"/>
</dbReference>
<dbReference type="Proteomes" id="UP000694727">
    <property type="component" value="Unplaced"/>
</dbReference>
<dbReference type="Proteomes" id="UP000694728">
    <property type="component" value="Unplaced"/>
</dbReference>
<dbReference type="Bgee" id="ENSSSCG00000005981">
    <property type="expression patterns" value="Expressed in psoas major muscle and 45 other cell types or tissues"/>
</dbReference>
<dbReference type="ExpressionAtlas" id="Q1A730">
    <property type="expression patterns" value="baseline and differential"/>
</dbReference>
<dbReference type="GO" id="GO:0005737">
    <property type="term" value="C:cytoplasm"/>
    <property type="evidence" value="ECO:0000250"/>
    <property type="project" value="UniProtKB"/>
</dbReference>
<dbReference type="GO" id="GO:0005829">
    <property type="term" value="C:cytosol"/>
    <property type="evidence" value="ECO:0007669"/>
    <property type="project" value="Ensembl"/>
</dbReference>
<dbReference type="GO" id="GO:0005654">
    <property type="term" value="C:nucleoplasm"/>
    <property type="evidence" value="ECO:0007669"/>
    <property type="project" value="Ensembl"/>
</dbReference>
<dbReference type="GO" id="GO:0005634">
    <property type="term" value="C:nucleus"/>
    <property type="evidence" value="ECO:0000318"/>
    <property type="project" value="GO_Central"/>
</dbReference>
<dbReference type="GO" id="GO:0019005">
    <property type="term" value="C:SCF ubiquitin ligase complex"/>
    <property type="evidence" value="ECO:0000318"/>
    <property type="project" value="GO_Central"/>
</dbReference>
<dbReference type="GO" id="GO:0030018">
    <property type="term" value="C:Z disc"/>
    <property type="evidence" value="ECO:0007669"/>
    <property type="project" value="Ensembl"/>
</dbReference>
<dbReference type="GO" id="GO:0071549">
    <property type="term" value="P:cellular response to dexamethasone stimulus"/>
    <property type="evidence" value="ECO:0007669"/>
    <property type="project" value="Ensembl"/>
</dbReference>
<dbReference type="GO" id="GO:0016567">
    <property type="term" value="P:protein ubiquitination"/>
    <property type="evidence" value="ECO:0000250"/>
    <property type="project" value="UniProtKB"/>
</dbReference>
<dbReference type="GO" id="GO:0014894">
    <property type="term" value="P:response to denervation involved in regulation of muscle adaptation"/>
    <property type="evidence" value="ECO:0000250"/>
    <property type="project" value="UniProtKB"/>
</dbReference>
<dbReference type="CDD" id="cd22103">
    <property type="entry name" value="F-box_FBXO32"/>
    <property type="match status" value="1"/>
</dbReference>
<dbReference type="FunFam" id="1.20.1280.50:FF:000017">
    <property type="entry name" value="F-box only protein 32"/>
    <property type="match status" value="1"/>
</dbReference>
<dbReference type="Gene3D" id="1.20.1280.50">
    <property type="match status" value="1"/>
</dbReference>
<dbReference type="InterPro" id="IPR036047">
    <property type="entry name" value="F-box-like_dom_sf"/>
</dbReference>
<dbReference type="InterPro" id="IPR001810">
    <property type="entry name" value="F-box_dom"/>
</dbReference>
<dbReference type="InterPro" id="IPR040394">
    <property type="entry name" value="FBX25/32"/>
</dbReference>
<dbReference type="PANTHER" id="PTHR13123:SF6">
    <property type="entry name" value="F-BOX ONLY PROTEIN 32"/>
    <property type="match status" value="1"/>
</dbReference>
<dbReference type="PANTHER" id="PTHR13123">
    <property type="entry name" value="LD30288P"/>
    <property type="match status" value="1"/>
</dbReference>
<dbReference type="Pfam" id="PF12937">
    <property type="entry name" value="F-box-like"/>
    <property type="match status" value="1"/>
</dbReference>
<dbReference type="SUPFAM" id="SSF81383">
    <property type="entry name" value="F-box domain"/>
    <property type="match status" value="1"/>
</dbReference>
<comment type="function">
    <text evidence="1">Substrate recognition component of a SCF (SKP1-CUL1-F-box protein) E3 ubiquitin-protein ligase complex which mediates the ubiquitination and subsequent proteasomal degradation of target proteins. Probably recognizes and binds to phosphorylated target proteins during skeletal muscle atrophy. Recognizes TERF1 (By similarity).</text>
</comment>
<comment type="pathway">
    <text>Protein modification; protein ubiquitination.</text>
</comment>
<comment type="subunit">
    <text evidence="2">Part of the SCF (SKP1-CUL1-F-box) E3 ubiquitin-protein ligase complex SCF(FBXO32) formed of CUL1, SKP1, RBX1 and FBXO32.</text>
</comment>
<comment type="subcellular location">
    <subcellularLocation>
        <location evidence="2">Cytoplasm</location>
    </subcellularLocation>
    <subcellularLocation>
        <location evidence="2">Nucleus</location>
    </subcellularLocation>
    <text evidence="2">Shuttles between cytoplasm and the nucleus.</text>
</comment>
<sequence>MPFLGQDWRSPGQSWVKTADGWKRFLDEKSGSFVSDLSSYCNKEVYNKENLFNSLNYDVAAKKRKKDMLNSKTKTQYFHQEKWIYVHKGSTKERHGYCTLGEAFNRLDFSTAILDSRRFNYVVRLLELIAKSQLTSLSGIAQKNFMNILEKVVLKVLEDQQNIRLIRELLQTLYTSLCTLVQRVGKSVLVGNINMWVYRMETILHWQQQLNNIQITRPAFKGLTFTDLPLCLQLNIMQRLSDGRDLVSLGQVAPDLHVLSEDRLLWKKLCQYHFSERQIRKRLILSDKGQLDWKKMYFKLVRCYPRKEQYGDTLQLCRHCHILSWKGTDHPCTANNPESCSVSLSPQDFINLFKF</sequence>
<keyword id="KW-0963">Cytoplasm</keyword>
<keyword id="KW-0539">Nucleus</keyword>
<keyword id="KW-1185">Reference proteome</keyword>
<keyword id="KW-0833">Ubl conjugation pathway</keyword>
<organism>
    <name type="scientific">Sus scrofa</name>
    <name type="common">Pig</name>
    <dbReference type="NCBI Taxonomy" id="9823"/>
    <lineage>
        <taxon>Eukaryota</taxon>
        <taxon>Metazoa</taxon>
        <taxon>Chordata</taxon>
        <taxon>Craniata</taxon>
        <taxon>Vertebrata</taxon>
        <taxon>Euteleostomi</taxon>
        <taxon>Mammalia</taxon>
        <taxon>Eutheria</taxon>
        <taxon>Laurasiatheria</taxon>
        <taxon>Artiodactyla</taxon>
        <taxon>Suina</taxon>
        <taxon>Suidae</taxon>
        <taxon>Sus</taxon>
    </lineage>
</organism>
<reference key="1">
    <citation type="submission" date="2005-11" db="EMBL/GenBank/DDBJ databases">
        <title>Polymorphism analysis of the porcine FBXO 32.</title>
        <authorList>
            <person name="Yu J."/>
            <person name="Zhu M.J."/>
            <person name="Liu B."/>
            <person name="Fan B."/>
            <person name="Li C.C."/>
            <person name="Zhao S.H."/>
        </authorList>
    </citation>
    <scope>NUCLEOTIDE SEQUENCE [MRNA]</scope>
</reference>
<name>FBX32_PIG</name>
<protein>
    <recommendedName>
        <fullName>F-box only protein 32</fullName>
    </recommendedName>
</protein>
<evidence type="ECO:0000250" key="1"/>
<evidence type="ECO:0000250" key="2">
    <source>
        <dbReference type="UniProtKB" id="Q969P5"/>
    </source>
</evidence>
<gene>
    <name type="primary">FBXO32</name>
</gene>
<proteinExistence type="evidence at transcript level"/>